<dbReference type="EC" id="2.4.2.62" evidence="3 4"/>
<dbReference type="EMBL" id="AK057046">
    <property type="protein sequence ID" value="BAB71355.1"/>
    <property type="molecule type" value="mRNA"/>
</dbReference>
<dbReference type="EMBL" id="AK092474">
    <property type="protein sequence ID" value="BAC03899.1"/>
    <property type="molecule type" value="mRNA"/>
</dbReference>
<dbReference type="EMBL" id="AK075551">
    <property type="protein sequence ID" value="BAC11694.1"/>
    <property type="molecule type" value="mRNA"/>
</dbReference>
<dbReference type="EMBL" id="CH471052">
    <property type="protein sequence ID" value="EAW78028.1"/>
    <property type="molecule type" value="Genomic_DNA"/>
</dbReference>
<dbReference type="EMBL" id="CH471052">
    <property type="protein sequence ID" value="EAW78029.1"/>
    <property type="molecule type" value="Genomic_DNA"/>
</dbReference>
<dbReference type="EMBL" id="BC019036">
    <property type="protein sequence ID" value="AAH19036.1"/>
    <property type="status" value="ALT_INIT"/>
    <property type="molecule type" value="mRNA"/>
</dbReference>
<dbReference type="EMBL" id="BC039067">
    <property type="protein sequence ID" value="AAH39067.2"/>
    <property type="molecule type" value="mRNA"/>
</dbReference>
<dbReference type="CCDS" id="CCDS43188.1">
    <molecule id="Q8NBI6-1"/>
</dbReference>
<dbReference type="CCDS" id="CCDS93439.1">
    <molecule id="Q8NBI6-2"/>
</dbReference>
<dbReference type="RefSeq" id="NP_001397783.1">
    <molecule id="Q8NBI6-2"/>
    <property type="nucleotide sequence ID" value="NM_001410854.1"/>
</dbReference>
<dbReference type="RefSeq" id="NP_689744.3">
    <molecule id="Q8NBI6-1"/>
    <property type="nucleotide sequence ID" value="NM_152531.4"/>
</dbReference>
<dbReference type="RefSeq" id="XP_016861239.1">
    <property type="nucleotide sequence ID" value="XM_017005750.1"/>
</dbReference>
<dbReference type="SMR" id="Q8NBI6"/>
<dbReference type="BioGRID" id="127415">
    <property type="interactions" value="73"/>
</dbReference>
<dbReference type="FunCoup" id="Q8NBI6">
    <property type="interactions" value="792"/>
</dbReference>
<dbReference type="IntAct" id="Q8NBI6">
    <property type="interactions" value="32"/>
</dbReference>
<dbReference type="STRING" id="9606.ENSP00000309640"/>
<dbReference type="CAZy" id="GT8">
    <property type="family name" value="Glycosyltransferase Family 8"/>
</dbReference>
<dbReference type="GlyGen" id="Q8NBI6">
    <property type="glycosylation" value="3 sites, 2 O-linked glycans (3 sites)"/>
</dbReference>
<dbReference type="iPTMnet" id="Q8NBI6"/>
<dbReference type="PhosphoSitePlus" id="Q8NBI6"/>
<dbReference type="SwissPalm" id="Q8NBI6"/>
<dbReference type="BioMuta" id="XXYLT1"/>
<dbReference type="DMDM" id="74751171"/>
<dbReference type="jPOST" id="Q8NBI6"/>
<dbReference type="MassIVE" id="Q8NBI6"/>
<dbReference type="PaxDb" id="9606-ENSP00000309640"/>
<dbReference type="PeptideAtlas" id="Q8NBI6"/>
<dbReference type="ProteomicsDB" id="72773">
    <molecule id="Q8NBI6-1"/>
</dbReference>
<dbReference type="ProteomicsDB" id="72774">
    <molecule id="Q8NBI6-2"/>
</dbReference>
<dbReference type="ProteomicsDB" id="72775">
    <molecule id="Q8NBI6-3"/>
</dbReference>
<dbReference type="Pumba" id="Q8NBI6"/>
<dbReference type="Antibodypedia" id="53804">
    <property type="antibodies" value="47 antibodies from 11 providers"/>
</dbReference>
<dbReference type="DNASU" id="152002"/>
<dbReference type="Ensembl" id="ENST00000310380.11">
    <molecule id="Q8NBI6-1"/>
    <property type="protein sequence ID" value="ENSP00000309640.6"/>
    <property type="gene ID" value="ENSG00000173950.16"/>
</dbReference>
<dbReference type="Ensembl" id="ENST00000356740.5">
    <molecule id="Q8NBI6-3"/>
    <property type="protein sequence ID" value="ENSP00000349179.5"/>
    <property type="gene ID" value="ENSG00000173950.16"/>
</dbReference>
<dbReference type="Ensembl" id="ENST00000437101.5">
    <molecule id="Q8NBI6-2"/>
    <property type="protein sequence ID" value="ENSP00000409865.1"/>
    <property type="gene ID" value="ENSG00000173950.16"/>
</dbReference>
<dbReference type="GeneID" id="152002"/>
<dbReference type="KEGG" id="hsa:152002"/>
<dbReference type="MANE-Select" id="ENST00000310380.11">
    <property type="protein sequence ID" value="ENSP00000309640.6"/>
    <property type="RefSeq nucleotide sequence ID" value="NM_152531.5"/>
    <property type="RefSeq protein sequence ID" value="NP_689744.3"/>
</dbReference>
<dbReference type="UCSC" id="uc003fuk.4">
    <molecule id="Q8NBI6-1"/>
    <property type="organism name" value="human"/>
</dbReference>
<dbReference type="AGR" id="HGNC:26639"/>
<dbReference type="CTD" id="152002"/>
<dbReference type="DisGeNET" id="152002"/>
<dbReference type="GeneCards" id="XXYLT1"/>
<dbReference type="HGNC" id="HGNC:26639">
    <property type="gene designation" value="XXYLT1"/>
</dbReference>
<dbReference type="HPA" id="ENSG00000173950">
    <property type="expression patterns" value="Low tissue specificity"/>
</dbReference>
<dbReference type="MIM" id="614552">
    <property type="type" value="gene"/>
</dbReference>
<dbReference type="neXtProt" id="NX_Q8NBI6"/>
<dbReference type="OpenTargets" id="ENSG00000173950"/>
<dbReference type="PharmGKB" id="PA134925222"/>
<dbReference type="VEuPathDB" id="HostDB:ENSG00000173950"/>
<dbReference type="eggNOG" id="KOG3765">
    <property type="taxonomic scope" value="Eukaryota"/>
</dbReference>
<dbReference type="GeneTree" id="ENSGT00940000158154"/>
<dbReference type="HOGENOM" id="CLU_048175_0_0_1"/>
<dbReference type="InParanoid" id="Q8NBI6"/>
<dbReference type="OMA" id="NVWCIFT"/>
<dbReference type="OrthoDB" id="411524at2759"/>
<dbReference type="PAN-GO" id="Q8NBI6">
    <property type="GO annotations" value="3 GO annotations based on evolutionary models"/>
</dbReference>
<dbReference type="PhylomeDB" id="Q8NBI6"/>
<dbReference type="TreeFam" id="TF323210"/>
<dbReference type="BRENDA" id="2.4.2.62">
    <property type="organism ID" value="2681"/>
</dbReference>
<dbReference type="PathwayCommons" id="Q8NBI6"/>
<dbReference type="SignaLink" id="Q8NBI6"/>
<dbReference type="SIGNOR" id="Q8NBI6"/>
<dbReference type="BioGRID-ORCS" id="152002">
    <property type="hits" value="20 hits in 1155 CRISPR screens"/>
</dbReference>
<dbReference type="ChiTaRS" id="XXYLT1">
    <property type="organism name" value="human"/>
</dbReference>
<dbReference type="GenomeRNAi" id="152002"/>
<dbReference type="Pharos" id="Q8NBI6">
    <property type="development level" value="Tbio"/>
</dbReference>
<dbReference type="PRO" id="PR:Q8NBI6"/>
<dbReference type="Proteomes" id="UP000005640">
    <property type="component" value="Chromosome 3"/>
</dbReference>
<dbReference type="RNAct" id="Q8NBI6">
    <property type="molecule type" value="protein"/>
</dbReference>
<dbReference type="Bgee" id="ENSG00000173950">
    <property type="expression patterns" value="Expressed in oocyte and 118 other cell types or tissues"/>
</dbReference>
<dbReference type="ExpressionAtlas" id="Q8NBI6">
    <property type="expression patterns" value="baseline and differential"/>
</dbReference>
<dbReference type="GO" id="GO:0005789">
    <property type="term" value="C:endoplasmic reticulum membrane"/>
    <property type="evidence" value="ECO:0000314"/>
    <property type="project" value="UniProtKB"/>
</dbReference>
<dbReference type="GO" id="GO:0000287">
    <property type="term" value="F:magnesium ion binding"/>
    <property type="evidence" value="ECO:0000314"/>
    <property type="project" value="UniProtKB"/>
</dbReference>
<dbReference type="GO" id="GO:0030145">
    <property type="term" value="F:manganese ion binding"/>
    <property type="evidence" value="ECO:0000314"/>
    <property type="project" value="UniProtKB"/>
</dbReference>
<dbReference type="GO" id="GO:0035252">
    <property type="term" value="F:UDP-xylosyltransferase activity"/>
    <property type="evidence" value="ECO:0000314"/>
    <property type="project" value="UniProtKB"/>
</dbReference>
<dbReference type="GO" id="GO:0140560">
    <property type="term" value="F:xylosyl alpha-1,3-xylosyltransferase activity"/>
    <property type="evidence" value="ECO:0000314"/>
    <property type="project" value="UniProtKB"/>
</dbReference>
<dbReference type="GO" id="GO:0016266">
    <property type="term" value="P:O-glycan processing"/>
    <property type="evidence" value="ECO:0000314"/>
    <property type="project" value="UniProtKB"/>
</dbReference>
<dbReference type="FunFam" id="3.90.550.10:FF:000098">
    <property type="entry name" value="xyloside xylosyltransferase 1"/>
    <property type="match status" value="1"/>
</dbReference>
<dbReference type="Gene3D" id="3.90.550.10">
    <property type="entry name" value="Spore Coat Polysaccharide Biosynthesis Protein SpsA, Chain A"/>
    <property type="match status" value="1"/>
</dbReference>
<dbReference type="InterPro" id="IPR002495">
    <property type="entry name" value="Glyco_trans_8"/>
</dbReference>
<dbReference type="InterPro" id="IPR029044">
    <property type="entry name" value="Nucleotide-diphossugar_trans"/>
</dbReference>
<dbReference type="InterPro" id="IPR042465">
    <property type="entry name" value="XXLT1"/>
</dbReference>
<dbReference type="PANTHER" id="PTHR46612">
    <property type="entry name" value="XYLOSIDE XYLOSYLTRANSFERASE 1"/>
    <property type="match status" value="1"/>
</dbReference>
<dbReference type="PANTHER" id="PTHR46612:SF1">
    <property type="entry name" value="XYLOSIDE XYLOSYLTRANSFERASE 1"/>
    <property type="match status" value="1"/>
</dbReference>
<dbReference type="Pfam" id="PF01501">
    <property type="entry name" value="Glyco_transf_8"/>
    <property type="match status" value="1"/>
</dbReference>
<dbReference type="SUPFAM" id="SSF53448">
    <property type="entry name" value="Nucleotide-diphospho-sugar transferases"/>
    <property type="match status" value="1"/>
</dbReference>
<accession>Q8NBI6</accession>
<accession>D3DNW5</accession>
<accession>Q8NAL3</accession>
<accession>Q8WV03</accession>
<accession>Q96ME0</accession>
<comment type="function">
    <text evidence="3 4">Alpha-1,3-xylosyltransferase, which elongates the O-linked xylose-glucose disaccharide attached to EGF-like repeats in the extracellular domain of target proteins by catalyzing the addition of the second xylose (PubMed:22117070, PubMed:8982869). Known targets include Notch proteins and coagulation factors, such as F9 (PubMed:22117070, PubMed:8982869).</text>
</comment>
<comment type="catalytic activity">
    <reaction evidence="3 4">
        <text>3-O-[alpha-D-xylosyl-(1-&gt;3)-beta-D-glucosyl]-L-seryl-[EGF-like domain protein] + UDP-alpha-D-xylose = 3-O-[alpha-D-xylosyl-(1-&gt;3)-alpha-D-xylosyl-(1-&gt;3)-beta-D-glucosyl]-L-seryl-[EGF-like domain protein] + UDP + H(+)</text>
        <dbReference type="Rhea" id="RHEA:22820"/>
        <dbReference type="Rhea" id="RHEA-COMP:14611"/>
        <dbReference type="Rhea" id="RHEA-COMP:14619"/>
        <dbReference type="ChEBI" id="CHEBI:15378"/>
        <dbReference type="ChEBI" id="CHEBI:57632"/>
        <dbReference type="ChEBI" id="CHEBI:58223"/>
        <dbReference type="ChEBI" id="CHEBI:140575"/>
        <dbReference type="ChEBI" id="CHEBI:140599"/>
        <dbReference type="EC" id="2.4.2.62"/>
    </reaction>
</comment>
<comment type="cofactor">
    <cofactor evidence="4">
        <name>Mg(2+)</name>
        <dbReference type="ChEBI" id="CHEBI:18420"/>
    </cofactor>
    <cofactor evidence="4">
        <name>Mn(2+)</name>
        <dbReference type="ChEBI" id="CHEBI:29035"/>
    </cofactor>
    <text evidence="4">Has the highest in vitro activity with 20 mM Mn(2+), a concentration entirely out of the physiological range. Can also utilize Mg(2+), suggesting this may be the physiological cofactor.</text>
</comment>
<comment type="biophysicochemical properties">
    <kinetics>
        <KM evidence="4">0.28 mM for UDP-alpha-D-xylose</KM>
    </kinetics>
    <phDependence>
        <text evidence="4">Optimum pH is 7.2.</text>
    </phDependence>
</comment>
<comment type="subunit">
    <text evidence="3 7">Homodimer (PubMed:22117070). Dimer formation may be essential for the retention in endoplasmic reticulum (Probable).</text>
</comment>
<comment type="subcellular location">
    <subcellularLocation>
        <location evidence="3">Endoplasmic reticulum membrane</location>
        <topology evidence="3">Single-pass type II membrane protein</topology>
    </subcellularLocation>
</comment>
<comment type="alternative products">
    <event type="alternative splicing"/>
    <isoform>
        <id>Q8NBI6-1</id>
        <name>1</name>
        <sequence type="displayed"/>
    </isoform>
    <isoform>
        <id>Q8NBI6-2</id>
        <name>2</name>
        <sequence type="described" ref="VSP_018315 VSP_018317"/>
    </isoform>
    <isoform>
        <id>Q8NBI6-3</id>
        <name>3</name>
        <sequence type="described" ref="VSP_018315 VSP_018316 VSP_018318"/>
    </isoform>
</comment>
<comment type="similarity">
    <text evidence="7">Belongs to the glycosyltransferase 8 family.</text>
</comment>
<comment type="caution">
    <text evidence="7">It is uncertain whether Met-1 or Met-14 is the initiator.</text>
</comment>
<comment type="sequence caution" evidence="7">
    <conflict type="erroneous initiation">
        <sequence resource="EMBL-CDS" id="AAH19036"/>
    </conflict>
    <text>Truncated N-terminus.</text>
</comment>
<feature type="chain" id="PRO_0000234427" description="Xyloside xylosyltransferase 1">
    <location>
        <begin position="1"/>
        <end position="393"/>
    </location>
</feature>
<feature type="topological domain" description="Cytoplasmic" evidence="8">
    <location>
        <begin position="1"/>
        <end position="23"/>
    </location>
</feature>
<feature type="transmembrane region" description="Helical; Signal-anchor for type II membrane protein" evidence="2">
    <location>
        <begin position="24"/>
        <end position="44"/>
    </location>
</feature>
<feature type="topological domain" description="Lumenal" evidence="8">
    <location>
        <begin position="45"/>
        <end position="393"/>
    </location>
</feature>
<feature type="region of interest" description="Interaction with target proteins" evidence="1">
    <location>
        <begin position="263"/>
        <end position="266"/>
    </location>
</feature>
<feature type="binding site" evidence="1">
    <location>
        <begin position="104"/>
        <end position="106"/>
    </location>
    <ligand>
        <name>UDP-alpha-D-xylose</name>
        <dbReference type="ChEBI" id="CHEBI:57632"/>
    </ligand>
</feature>
<feature type="binding site" evidence="1">
    <location>
        <position position="226"/>
    </location>
    <ligand>
        <name>Mn(2+)</name>
        <dbReference type="ChEBI" id="CHEBI:29035"/>
    </ligand>
</feature>
<feature type="binding site" evidence="1">
    <location>
        <position position="227"/>
    </location>
    <ligand>
        <name>UDP-alpha-D-xylose</name>
        <dbReference type="ChEBI" id="CHEBI:57632"/>
    </ligand>
</feature>
<feature type="binding site" evidence="1">
    <location>
        <position position="228"/>
    </location>
    <ligand>
        <name>Mn(2+)</name>
        <dbReference type="ChEBI" id="CHEBI:29035"/>
    </ligand>
</feature>
<feature type="binding site" evidence="1">
    <location>
        <position position="290"/>
    </location>
    <ligand>
        <name>UDP-alpha-D-xylose</name>
        <dbReference type="ChEBI" id="CHEBI:57632"/>
    </ligand>
</feature>
<feature type="binding site" evidence="1">
    <location>
        <position position="328"/>
    </location>
    <ligand>
        <name>UDP-alpha-D-xylose</name>
        <dbReference type="ChEBI" id="CHEBI:57632"/>
    </ligand>
</feature>
<feature type="binding site" evidence="1">
    <location>
        <position position="331"/>
    </location>
    <ligand>
        <name>a glycoprotein</name>
        <dbReference type="ChEBI" id="CHEBI:17089"/>
        <note>substrate</note>
    </ligand>
    <ligandPart>
        <name>3-O-[alpha-D-xylosyl-(1-&gt;3)-beta-D-glucosyl]-L-seryl residue</name>
        <dbReference type="ChEBI" id="CHEBI:140575"/>
    </ligandPart>
</feature>
<feature type="binding site" evidence="1">
    <location>
        <position position="331"/>
    </location>
    <ligand>
        <name>UDP-alpha-D-xylose</name>
        <dbReference type="ChEBI" id="CHEBI:57632"/>
    </ligand>
</feature>
<feature type="binding site" evidence="1">
    <location>
        <position position="360"/>
    </location>
    <ligand>
        <name>a glycoprotein</name>
        <dbReference type="ChEBI" id="CHEBI:17089"/>
        <note>substrate</note>
    </ligand>
    <ligandPart>
        <name>3-O-[alpha-D-xylosyl-(1-&gt;3)-beta-D-glucosyl]-L-seryl residue</name>
        <dbReference type="ChEBI" id="CHEBI:140575"/>
    </ligandPart>
</feature>
<feature type="binding site" evidence="1">
    <location>
        <position position="383"/>
    </location>
    <ligand>
        <name>Mn(2+)</name>
        <dbReference type="ChEBI" id="CHEBI:29035"/>
    </ligand>
</feature>
<feature type="binding site" evidence="1">
    <location>
        <position position="385"/>
    </location>
    <ligand>
        <name>a glycoprotein</name>
        <dbReference type="ChEBI" id="CHEBI:17089"/>
        <note>substrate</note>
    </ligand>
    <ligandPart>
        <name>3-O-[alpha-D-xylosyl-(1-&gt;3)-beta-D-glucosyl]-L-seryl residue</name>
        <dbReference type="ChEBI" id="CHEBI:140575"/>
    </ligandPart>
</feature>
<feature type="disulfide bond" evidence="1">
    <location>
        <begin position="350"/>
        <end position="375"/>
    </location>
</feature>
<feature type="disulfide bond" evidence="1">
    <location>
        <begin position="357"/>
        <end position="386"/>
    </location>
</feature>
<feature type="splice variant" id="VSP_018315" description="In isoform 2 and isoform 3." evidence="5">
    <location>
        <begin position="1"/>
        <end position="203"/>
    </location>
</feature>
<feature type="splice variant" id="VSP_018317" description="In isoform 2." evidence="5">
    <original>IFFLSVAMHQIMPK</original>
    <variation>MWPPRCKDPGRQSA</variation>
    <location>
        <begin position="204"/>
        <end position="217"/>
    </location>
</feature>
<feature type="splice variant" id="VSP_018316" description="In isoform 3." evidence="5">
    <location>
        <begin position="204"/>
        <end position="206"/>
    </location>
</feature>
<feature type="splice variant" id="VSP_018318" description="In isoform 3." evidence="5">
    <original>LSVAMHQIMPKEILQIIQLDLDLKFKTNIRELFEEFDSFLPGAIIGIAREMQPVYR</original>
    <variation>MNGMSVLMKETLKSSVTPSPYEETGERQPSVNWAVSPHQTQNQWARWSWTSQPLEL</variation>
    <location>
        <begin position="207"/>
        <end position="262"/>
    </location>
</feature>
<name>XXLT1_HUMAN</name>
<gene>
    <name type="primary">XXYLT1</name>
    <name type="synonym">C3orf21</name>
    <name type="ORF">PSEC0251</name>
</gene>
<protein>
    <recommendedName>
        <fullName evidence="6">Xyloside xylosyltransferase 1</fullName>
        <ecNumber evidence="3 4">2.4.2.62</ecNumber>
    </recommendedName>
    <alternativeName>
        <fullName>UDP-xylose:alpha-xyloside alpha-1,3-xylosyltransferase</fullName>
    </alternativeName>
</protein>
<sequence length="393" mass="43807">MGLLRGGLPCARAMARLGAVRSHYCALLLAAALAVCAFYYLGSGRETFSSATKRLKEARAGAPAAPSPPALELARGSVAPAPGAKAKSLEGGGAGPVDYHLLMMFTKAEHNAALQAKARVALRSLLRLAKFEAHEVLNLHFVSEEASREVAKGLLRELLPPAAGFKCKVIFHDVAVLTDKLFPIVEAMQKHFSAGLGTYYSDSIFFLSVAMHQIMPKEILQIIQLDLDLKFKTNIRELFEEFDSFLPGAIIGIAREMQPVYRHTFWQFRHENPQTRVGGPPPEGLPGFNSGVMLLNLEAMRQSPLYSRLLEPAQVQQLADKYHFRGHLGDQDFFTMIGMEHPKLFHVLDCTWNRQLCTWWRDHGYSDVFEAYFRCEGHVKIYHGNCNTPIPED</sequence>
<organism>
    <name type="scientific">Homo sapiens</name>
    <name type="common">Human</name>
    <dbReference type="NCBI Taxonomy" id="9606"/>
    <lineage>
        <taxon>Eukaryota</taxon>
        <taxon>Metazoa</taxon>
        <taxon>Chordata</taxon>
        <taxon>Craniata</taxon>
        <taxon>Vertebrata</taxon>
        <taxon>Euteleostomi</taxon>
        <taxon>Mammalia</taxon>
        <taxon>Eutheria</taxon>
        <taxon>Euarchontoglires</taxon>
        <taxon>Primates</taxon>
        <taxon>Haplorrhini</taxon>
        <taxon>Catarrhini</taxon>
        <taxon>Hominidae</taxon>
        <taxon>Homo</taxon>
    </lineage>
</organism>
<evidence type="ECO:0000250" key="1">
    <source>
        <dbReference type="UniProtKB" id="Q3U4G3"/>
    </source>
</evidence>
<evidence type="ECO:0000255" key="2"/>
<evidence type="ECO:0000269" key="3">
    <source>
    </source>
</evidence>
<evidence type="ECO:0000269" key="4">
    <source>
    </source>
</evidence>
<evidence type="ECO:0000303" key="5">
    <source>
    </source>
</evidence>
<evidence type="ECO:0000303" key="6">
    <source>
    </source>
</evidence>
<evidence type="ECO:0000305" key="7"/>
<evidence type="ECO:0000305" key="8">
    <source>
    </source>
</evidence>
<proteinExistence type="evidence at protein level"/>
<keyword id="KW-0025">Alternative splicing</keyword>
<keyword id="KW-1015">Disulfide bond</keyword>
<keyword id="KW-0256">Endoplasmic reticulum</keyword>
<keyword id="KW-0328">Glycosyltransferase</keyword>
<keyword id="KW-0460">Magnesium</keyword>
<keyword id="KW-0464">Manganese</keyword>
<keyword id="KW-0472">Membrane</keyword>
<keyword id="KW-0479">Metal-binding</keyword>
<keyword id="KW-1267">Proteomics identification</keyword>
<keyword id="KW-1185">Reference proteome</keyword>
<keyword id="KW-0735">Signal-anchor</keyword>
<keyword id="KW-0808">Transferase</keyword>
<keyword id="KW-0812">Transmembrane</keyword>
<keyword id="KW-1133">Transmembrane helix</keyword>
<reference key="1">
    <citation type="journal article" date="2012" name="J. Biol. Chem.">
        <title>Molecular cloning of a xylosyltransferase that transfers the second xylose to O-glucosylated epidermal growth factor repeats of Notch.</title>
        <authorList>
            <person name="Sethi M.K."/>
            <person name="Buettner F.F."/>
            <person name="Ashikov A."/>
            <person name="Krylov V.B."/>
            <person name="Takeuchi H."/>
            <person name="Nifantiev N.E."/>
            <person name="Haltiwanger R.S."/>
            <person name="Gerardy-Schahn R."/>
            <person name="Bakker H."/>
        </authorList>
    </citation>
    <scope>NUCLEOTIDE SEQUENCE [MRNA] (ISOFORM 1)</scope>
    <scope>FUNCTION</scope>
    <scope>CATALYTIC ACTIVITY</scope>
    <scope>SUBUNIT</scope>
    <scope>SUBCELLULAR LOCATION</scope>
    <scope>TOPOLOGY</scope>
</reference>
<reference key="2">
    <citation type="journal article" date="2004" name="Nat. Genet.">
        <title>Complete sequencing and characterization of 21,243 full-length human cDNAs.</title>
        <authorList>
            <person name="Ota T."/>
            <person name="Suzuki Y."/>
            <person name="Nishikawa T."/>
            <person name="Otsuki T."/>
            <person name="Sugiyama T."/>
            <person name="Irie R."/>
            <person name="Wakamatsu A."/>
            <person name="Hayashi K."/>
            <person name="Sato H."/>
            <person name="Nagai K."/>
            <person name="Kimura K."/>
            <person name="Makita H."/>
            <person name="Sekine M."/>
            <person name="Obayashi M."/>
            <person name="Nishi T."/>
            <person name="Shibahara T."/>
            <person name="Tanaka T."/>
            <person name="Ishii S."/>
            <person name="Yamamoto J."/>
            <person name="Saito K."/>
            <person name="Kawai Y."/>
            <person name="Isono Y."/>
            <person name="Nakamura Y."/>
            <person name="Nagahari K."/>
            <person name="Murakami K."/>
            <person name="Yasuda T."/>
            <person name="Iwayanagi T."/>
            <person name="Wagatsuma M."/>
            <person name="Shiratori A."/>
            <person name="Sudo H."/>
            <person name="Hosoiri T."/>
            <person name="Kaku Y."/>
            <person name="Kodaira H."/>
            <person name="Kondo H."/>
            <person name="Sugawara M."/>
            <person name="Takahashi M."/>
            <person name="Kanda K."/>
            <person name="Yokoi T."/>
            <person name="Furuya T."/>
            <person name="Kikkawa E."/>
            <person name="Omura Y."/>
            <person name="Abe K."/>
            <person name="Kamihara K."/>
            <person name="Katsuta N."/>
            <person name="Sato K."/>
            <person name="Tanikawa M."/>
            <person name="Yamazaki M."/>
            <person name="Ninomiya K."/>
            <person name="Ishibashi T."/>
            <person name="Yamashita H."/>
            <person name="Murakawa K."/>
            <person name="Fujimori K."/>
            <person name="Tanai H."/>
            <person name="Kimata M."/>
            <person name="Watanabe M."/>
            <person name="Hiraoka S."/>
            <person name="Chiba Y."/>
            <person name="Ishida S."/>
            <person name="Ono Y."/>
            <person name="Takiguchi S."/>
            <person name="Watanabe S."/>
            <person name="Yosida M."/>
            <person name="Hotuta T."/>
            <person name="Kusano J."/>
            <person name="Kanehori K."/>
            <person name="Takahashi-Fujii A."/>
            <person name="Hara H."/>
            <person name="Tanase T.-O."/>
            <person name="Nomura Y."/>
            <person name="Togiya S."/>
            <person name="Komai F."/>
            <person name="Hara R."/>
            <person name="Takeuchi K."/>
            <person name="Arita M."/>
            <person name="Imose N."/>
            <person name="Musashino K."/>
            <person name="Yuuki H."/>
            <person name="Oshima A."/>
            <person name="Sasaki N."/>
            <person name="Aotsuka S."/>
            <person name="Yoshikawa Y."/>
            <person name="Matsunawa H."/>
            <person name="Ichihara T."/>
            <person name="Shiohata N."/>
            <person name="Sano S."/>
            <person name="Moriya S."/>
            <person name="Momiyama H."/>
            <person name="Satoh N."/>
            <person name="Takami S."/>
            <person name="Terashima Y."/>
            <person name="Suzuki O."/>
            <person name="Nakagawa S."/>
            <person name="Senoh A."/>
            <person name="Mizoguchi H."/>
            <person name="Goto Y."/>
            <person name="Shimizu F."/>
            <person name="Wakebe H."/>
            <person name="Hishigaki H."/>
            <person name="Watanabe T."/>
            <person name="Sugiyama A."/>
            <person name="Takemoto M."/>
            <person name="Kawakami B."/>
            <person name="Yamazaki M."/>
            <person name="Watanabe K."/>
            <person name="Kumagai A."/>
            <person name="Itakura S."/>
            <person name="Fukuzumi Y."/>
            <person name="Fujimori Y."/>
            <person name="Komiyama M."/>
            <person name="Tashiro H."/>
            <person name="Tanigami A."/>
            <person name="Fujiwara T."/>
            <person name="Ono T."/>
            <person name="Yamada K."/>
            <person name="Fujii Y."/>
            <person name="Ozaki K."/>
            <person name="Hirao M."/>
            <person name="Ohmori Y."/>
            <person name="Kawabata A."/>
            <person name="Hikiji T."/>
            <person name="Kobatake N."/>
            <person name="Inagaki H."/>
            <person name="Ikema Y."/>
            <person name="Okamoto S."/>
            <person name="Okitani R."/>
            <person name="Kawakami T."/>
            <person name="Noguchi S."/>
            <person name="Itoh T."/>
            <person name="Shigeta K."/>
            <person name="Senba T."/>
            <person name="Matsumura K."/>
            <person name="Nakajima Y."/>
            <person name="Mizuno T."/>
            <person name="Morinaga M."/>
            <person name="Sasaki M."/>
            <person name="Togashi T."/>
            <person name="Oyama M."/>
            <person name="Hata H."/>
            <person name="Watanabe M."/>
            <person name="Komatsu T."/>
            <person name="Mizushima-Sugano J."/>
            <person name="Satoh T."/>
            <person name="Shirai Y."/>
            <person name="Takahashi Y."/>
            <person name="Nakagawa K."/>
            <person name="Okumura K."/>
            <person name="Nagase T."/>
            <person name="Nomura N."/>
            <person name="Kikuchi H."/>
            <person name="Masuho Y."/>
            <person name="Yamashita R."/>
            <person name="Nakai K."/>
            <person name="Yada T."/>
            <person name="Nakamura Y."/>
            <person name="Ohara O."/>
            <person name="Isogai T."/>
            <person name="Sugano S."/>
        </authorList>
    </citation>
    <scope>NUCLEOTIDE SEQUENCE [LARGE SCALE MRNA] (ISOFORMS 2 AND 3)</scope>
    <source>
        <tissue>Placenta</tissue>
    </source>
</reference>
<reference key="3">
    <citation type="journal article" date="2005" name="DNA Res.">
        <title>Signal sequence and keyword trap in silico for selection of full-length human cDNAs encoding secretion or membrane proteins from oligo-capped cDNA libraries.</title>
        <authorList>
            <person name="Otsuki T."/>
            <person name="Ota T."/>
            <person name="Nishikawa T."/>
            <person name="Hayashi K."/>
            <person name="Suzuki Y."/>
            <person name="Yamamoto J."/>
            <person name="Wakamatsu A."/>
            <person name="Kimura K."/>
            <person name="Sakamoto K."/>
            <person name="Hatano N."/>
            <person name="Kawai Y."/>
            <person name="Ishii S."/>
            <person name="Saito K."/>
            <person name="Kojima S."/>
            <person name="Sugiyama T."/>
            <person name="Ono T."/>
            <person name="Okano K."/>
            <person name="Yoshikawa Y."/>
            <person name="Aotsuka S."/>
            <person name="Sasaki N."/>
            <person name="Hattori A."/>
            <person name="Okumura K."/>
            <person name="Nagai K."/>
            <person name="Sugano S."/>
            <person name="Isogai T."/>
        </authorList>
    </citation>
    <scope>NUCLEOTIDE SEQUENCE [LARGE SCALE MRNA] (ISOFORM 1)</scope>
    <source>
        <tissue>Neuron</tissue>
    </source>
</reference>
<reference key="4">
    <citation type="submission" date="2005-09" db="EMBL/GenBank/DDBJ databases">
        <authorList>
            <person name="Mural R.J."/>
            <person name="Istrail S."/>
            <person name="Sutton G.G."/>
            <person name="Florea L."/>
            <person name="Halpern A.L."/>
            <person name="Mobarry C.M."/>
            <person name="Lippert R."/>
            <person name="Walenz B."/>
            <person name="Shatkay H."/>
            <person name="Dew I."/>
            <person name="Miller J.R."/>
            <person name="Flanigan M.J."/>
            <person name="Edwards N.J."/>
            <person name="Bolanos R."/>
            <person name="Fasulo D."/>
            <person name="Halldorsson B.V."/>
            <person name="Hannenhalli S."/>
            <person name="Turner R."/>
            <person name="Yooseph S."/>
            <person name="Lu F."/>
            <person name="Nusskern D.R."/>
            <person name="Shue B.C."/>
            <person name="Zheng X.H."/>
            <person name="Zhong F."/>
            <person name="Delcher A.L."/>
            <person name="Huson D.H."/>
            <person name="Kravitz S.A."/>
            <person name="Mouchard L."/>
            <person name="Reinert K."/>
            <person name="Remington K.A."/>
            <person name="Clark A.G."/>
            <person name="Waterman M.S."/>
            <person name="Eichler E.E."/>
            <person name="Adams M.D."/>
            <person name="Hunkapiller M.W."/>
            <person name="Myers E.W."/>
            <person name="Venter J.C."/>
        </authorList>
    </citation>
    <scope>NUCLEOTIDE SEQUENCE [LARGE SCALE GENOMIC DNA]</scope>
</reference>
<reference key="5">
    <citation type="journal article" date="2004" name="Genome Res.">
        <title>The status, quality, and expansion of the NIH full-length cDNA project: the Mammalian Gene Collection (MGC).</title>
        <authorList>
            <consortium name="The MGC Project Team"/>
        </authorList>
    </citation>
    <scope>NUCLEOTIDE SEQUENCE [LARGE SCALE MRNA] (ISOFORM 1)</scope>
    <source>
        <tissue>Kidney</tissue>
    </source>
</reference>
<reference key="6">
    <citation type="journal article" date="1996" name="J. Biochem.">
        <title>Detection of UDP-D-xylose: alpha-D-xyloside alpha 1--&gt;3xylosyltransferase activity in human hepatoma cell line HepG2.</title>
        <authorList>
            <person name="Minamida S."/>
            <person name="Aoki K."/>
            <person name="Natsuka S."/>
            <person name="Omichi K."/>
            <person name="Fukase K."/>
            <person name="Kusumoto S."/>
            <person name="Hase S."/>
        </authorList>
    </citation>
    <scope>FUNCTION</scope>
    <scope>CATALYTIC ACTIVITY</scope>
    <scope>COFACTOR</scope>
    <scope>BIOPHYSICOCHEMICAL PROPERTIES</scope>
</reference>